<comment type="function">
    <text evidence="6">Lysine-specific endoprotease (PubMed:12419815). Involved in corneal virulence.</text>
</comment>
<comment type="catalytic activity">
    <reaction>
        <text>Preferential cleavage: Lys-|-Xaa, including Lys-|-Pro.</text>
        <dbReference type="EC" id="3.4.21.50"/>
    </reaction>
</comment>
<comment type="subcellular location">
    <subcellularLocation>
        <location evidence="3">Secreted</location>
    </subcellularLocation>
    <text>Experiments performed in E.coli.</text>
</comment>
<comment type="PTM">
    <text evidence="6">Experiments performed in E.coli. Processing of pro-endopeptidase to mature endopeptidase is probably autocatalytic, as mutations in the probable active site residues prevent processing, and purified inactive pro-endopeptidase disappears in the presence of active endopeptidase.</text>
</comment>
<comment type="similarity">
    <text evidence="5">Belongs to the peptidase S1 family.</text>
</comment>
<organism>
    <name type="scientific">Pseudomonas aeruginosa (strain ATCC 15692 / DSM 22644 / CIP 104116 / JCM 14847 / LMG 12228 / 1C / PRS 101 / PAO1)</name>
    <dbReference type="NCBI Taxonomy" id="208964"/>
    <lineage>
        <taxon>Bacteria</taxon>
        <taxon>Pseudomonadati</taxon>
        <taxon>Pseudomonadota</taxon>
        <taxon>Gammaproteobacteria</taxon>
        <taxon>Pseudomonadales</taxon>
        <taxon>Pseudomonadaceae</taxon>
        <taxon>Pseudomonas</taxon>
    </lineage>
</organism>
<keyword id="KW-0068">Autocatalytic cleavage</keyword>
<keyword id="KW-0903">Direct protein sequencing</keyword>
<keyword id="KW-1015">Disulfide bond</keyword>
<keyword id="KW-0378">Hydrolase</keyword>
<keyword id="KW-0645">Protease</keyword>
<keyword id="KW-1185">Reference proteome</keyword>
<keyword id="KW-0964">Secreted</keyword>
<keyword id="KW-0720">Serine protease</keyword>
<keyword id="KW-0732">Signal</keyword>
<keyword id="KW-0843">Virulence</keyword>
<keyword id="KW-0865">Zymogen</keyword>
<evidence type="ECO:0000250" key="1"/>
<evidence type="ECO:0000255" key="2"/>
<evidence type="ECO:0000269" key="3">
    <source>
    </source>
</evidence>
<evidence type="ECO:0000269" key="4">
    <source ref="4"/>
</evidence>
<evidence type="ECO:0000305" key="5"/>
<evidence type="ECO:0000305" key="6">
    <source>
    </source>
</evidence>
<feature type="signal peptide" evidence="2">
    <location>
        <begin position="1"/>
        <end position="24"/>
    </location>
</feature>
<feature type="propeptide" id="PRO_0000228678" evidence="4">
    <location>
        <begin position="25"/>
        <end position="211"/>
    </location>
</feature>
<feature type="chain" id="PRO_0000228679" description="Lysyl endopeptidase">
    <location>
        <begin position="212"/>
        <end position="462"/>
    </location>
</feature>
<feature type="active site" description="Charge relay system" evidence="6">
    <location>
        <position position="283"/>
    </location>
</feature>
<feature type="active site" description="Charge relay system" evidence="6">
    <location>
        <position position="333"/>
    </location>
</feature>
<feature type="active site" description="Charge relay system" evidence="6">
    <location>
        <position position="409"/>
    </location>
</feature>
<feature type="disulfide bond" evidence="1">
    <location>
        <begin position="224"/>
        <end position="435"/>
    </location>
</feature>
<feature type="disulfide bond" evidence="1">
    <location>
        <begin position="230"/>
        <end position="305"/>
    </location>
</feature>
<feature type="disulfide bond" evidence="1">
    <location>
        <begin position="262"/>
        <end position="284"/>
    </location>
</feature>
<feature type="mutagenesis site" description="Loss of activity; no processing of pre-pro-protein." evidence="3">
    <original>H</original>
    <variation>A</variation>
    <location>
        <position position="283"/>
    </location>
</feature>
<feature type="mutagenesis site" description="No loss of activity." evidence="3">
    <original>H</original>
    <variation>A</variation>
    <location>
        <position position="327"/>
    </location>
</feature>
<feature type="mutagenesis site" description="Loss of activity; no processing of pre-pro-protein." evidence="3">
    <original>D</original>
    <variation>A</variation>
    <location>
        <position position="333"/>
    </location>
</feature>
<feature type="mutagenesis site" description="Loss of activity; no processing of pre-pro-protein." evidence="3">
    <original>S</original>
    <variation>A</variation>
    <location>
        <position position="408"/>
    </location>
</feature>
<feature type="mutagenesis site" description="Loss of activity; no processing of pre-pro-protein." evidence="3">
    <original>S</original>
    <variation>A</variation>
    <location>
        <position position="409"/>
    </location>
</feature>
<feature type="mutagenesis site" description="No loss of activity." evidence="3">
    <original>S</original>
    <variation>A</variation>
    <location>
        <position position="411"/>
    </location>
</feature>
<feature type="sequence conflict" description="In Ref. 1; AAL47683." evidence="5" ref="1">
    <original>L</original>
    <variation>S</variation>
    <location>
        <position position="23"/>
    </location>
</feature>
<feature type="sequence conflict" description="In Ref. 1; AAL47683." evidence="5" ref="1">
    <original>I</original>
    <variation>T</variation>
    <location>
        <position position="57"/>
    </location>
</feature>
<feature type="sequence conflict" description="In Ref. 1; AAL47683." evidence="5" ref="1">
    <original>T</original>
    <variation>A</variation>
    <location>
        <position position="102"/>
    </location>
</feature>
<feature type="sequence conflict" description="In Ref. 1; AAL47683 and 2; AAW33983." evidence="5" ref="1 2">
    <original>H</original>
    <variation>R</variation>
    <location>
        <position position="137"/>
    </location>
</feature>
<dbReference type="EC" id="3.4.21.50"/>
<dbReference type="EMBL" id="AY062882">
    <property type="protein sequence ID" value="AAL47683.1"/>
    <property type="molecule type" value="Genomic_DNA"/>
</dbReference>
<dbReference type="EMBL" id="AY850373">
    <property type="protein sequence ID" value="AAW33983.1"/>
    <property type="molecule type" value="Genomic_DNA"/>
</dbReference>
<dbReference type="EMBL" id="AE004091">
    <property type="protein sequence ID" value="AAG07562.1"/>
    <property type="molecule type" value="Genomic_DNA"/>
</dbReference>
<dbReference type="PIR" id="B83123">
    <property type="entry name" value="B83123"/>
</dbReference>
<dbReference type="SMR" id="Q9HWK6"/>
<dbReference type="STRING" id="208964.PA4175"/>
<dbReference type="MEROPS" id="S01.281"/>
<dbReference type="PaxDb" id="208964-PA4175"/>
<dbReference type="KEGG" id="pae:PA4175"/>
<dbReference type="PATRIC" id="fig|208964.12.peg.4374"/>
<dbReference type="PseudoCAP" id="PA4175"/>
<dbReference type="HOGENOM" id="CLU_047007_0_0_6"/>
<dbReference type="InParanoid" id="Q9HWK6"/>
<dbReference type="OrthoDB" id="5619888at2"/>
<dbReference type="BioCyc" id="PAER208964:G1FZ6-4248-MONOMER"/>
<dbReference type="PHI-base" id="PHI:3284"/>
<dbReference type="Proteomes" id="UP000002438">
    <property type="component" value="Chromosome"/>
</dbReference>
<dbReference type="GO" id="GO:0005615">
    <property type="term" value="C:extracellular space"/>
    <property type="evidence" value="ECO:0000314"/>
    <property type="project" value="PseudoCAP"/>
</dbReference>
<dbReference type="GO" id="GO:0008236">
    <property type="term" value="F:serine-type peptidase activity"/>
    <property type="evidence" value="ECO:0000314"/>
    <property type="project" value="PseudoCAP"/>
</dbReference>
<dbReference type="GO" id="GO:0006554">
    <property type="term" value="P:lysine catabolic process"/>
    <property type="evidence" value="ECO:0000314"/>
    <property type="project" value="PseudoCAP"/>
</dbReference>
<dbReference type="GO" id="GO:0015628">
    <property type="term" value="P:protein secretion by the type II secretion system"/>
    <property type="evidence" value="ECO:0000314"/>
    <property type="project" value="PseudoCAP"/>
</dbReference>
<dbReference type="GO" id="GO:0043952">
    <property type="term" value="P:protein transport by the Sec complex"/>
    <property type="evidence" value="ECO:0000314"/>
    <property type="project" value="PseudoCAP"/>
</dbReference>
<dbReference type="GO" id="GO:0006508">
    <property type="term" value="P:proteolysis"/>
    <property type="evidence" value="ECO:0000314"/>
    <property type="project" value="PseudoCAP"/>
</dbReference>
<dbReference type="GO" id="GO:0141174">
    <property type="term" value="P:symbiont-mediated suppression of host anti-inflammatory cytokine signaling"/>
    <property type="evidence" value="ECO:0000269"/>
    <property type="project" value="SigSci"/>
</dbReference>
<dbReference type="Gene3D" id="2.40.10.10">
    <property type="entry name" value="Trypsin-like serine proteases"/>
    <property type="match status" value="2"/>
</dbReference>
<dbReference type="InterPro" id="IPR009003">
    <property type="entry name" value="Peptidase_S1_PA"/>
</dbReference>
<dbReference type="InterPro" id="IPR043504">
    <property type="entry name" value="Peptidase_S1_PA_chymotrypsin"/>
</dbReference>
<dbReference type="PANTHER" id="PTHR36234">
    <property type="entry name" value="LYSYL ENDOPEPTIDASE"/>
    <property type="match status" value="1"/>
</dbReference>
<dbReference type="PANTHER" id="PTHR36234:SF5">
    <property type="entry name" value="LYSYL ENDOPEPTIDASE"/>
    <property type="match status" value="1"/>
</dbReference>
<dbReference type="SUPFAM" id="SSF50494">
    <property type="entry name" value="Trypsin-like serine proteases"/>
    <property type="match status" value="1"/>
</dbReference>
<name>LYSC_PSEAE</name>
<sequence>MHKRTYLNACLVLALAAGASQALAAPGASEMAGDVAVLQASPASTGHARFANPNAAISAAGIHFAAPPARRVARAAPLAPKPGTPLQVGVGLKTATPEIDLTTLEWIDTPDGRHTARFPISAAGAASLRAAIRLETHSGSLPDDVLLHFAGAGKEIFEASGKDLSVNRPYWSPVIEGDTLTVELVLPANLQPGDLRLSVPQVSYFADSLYKAGYRDGFGASGSCEVDAVCATQSGTRAYDNATAAVAKMVFTSSADGGSYICTGTLLNNGNSPKRQLFWSAAHCIEDQATAATLQTIWFYNTTQCYGDASTINQSVTVLTGGANILHRDAKRDTLLLELKRTPPAGVFYQGWSATPIANGSLGHDIHHPRGDAKKYSQGNVSAVGVTYDGHTALTRVDWPSAVVEGGSSGSGLLTVAGDGSYQLRGGLYGGPSYCGAPTSQRNDYFSDFSGVYSQISRYFAP</sequence>
<accession>Q9HWK6</accession>
<accession>P82468</accession>
<accession>Q5I6A6</accession>
<accession>Q8VPA4</accession>
<proteinExistence type="evidence at protein level"/>
<reference key="1">
    <citation type="journal article" date="2003" name="J. Biol. Chem.">
        <title>Identification of the active site residues of Pseudomonas aeruginosa protease IV. Importance of enzyme activity in autoprocessing and activation.</title>
        <authorList>
            <person name="Traidej M."/>
            <person name="Marquart M.E."/>
            <person name="Caballero A.R."/>
            <person name="Thibodeaux B.A."/>
            <person name="O'Callaghan R.J."/>
        </authorList>
    </citation>
    <scope>NUCLEOTIDE SEQUENCE [GENOMIC DNA]</scope>
    <scope>FUNCTION</scope>
    <scope>SUBCELLULAR LOCATION</scope>
    <scope>PROTEOLYTIC CLEAVAGE</scope>
    <scope>EXPRESSION IN E.COLI</scope>
    <scope>MUTAGENESIS OF HIS-283; HIS-327; ASP-333; SER-408; SER-409 AND SER-411</scope>
    <source>
        <strain>PA103-29</strain>
    </source>
</reference>
<reference key="2">
    <citation type="submission" date="2004-12" db="EMBL/GenBank/DDBJ databases">
        <title>PrpL protease of Pseudomonas aeruginosa: an important virulence determinant in corneal infections.</title>
        <authorList>
            <person name="Parveen N."/>
            <person name="Parker D.S."/>
            <person name="Fan L."/>
            <person name="Leong J.M."/>
            <person name="Goguen J.D."/>
        </authorList>
    </citation>
    <scope>NUCLEOTIDE SEQUENCE [GENOMIC DNA]</scope>
    <source>
        <strain>PA4481</strain>
    </source>
</reference>
<reference key="3">
    <citation type="journal article" date="2000" name="Nature">
        <title>Complete genome sequence of Pseudomonas aeruginosa PAO1, an opportunistic pathogen.</title>
        <authorList>
            <person name="Stover C.K."/>
            <person name="Pham X.-Q.T."/>
            <person name="Erwin A.L."/>
            <person name="Mizoguchi S.D."/>
            <person name="Warrener P."/>
            <person name="Hickey M.J."/>
            <person name="Brinkman F.S.L."/>
            <person name="Hufnagle W.O."/>
            <person name="Kowalik D.J."/>
            <person name="Lagrou M."/>
            <person name="Garber R.L."/>
            <person name="Goltry L."/>
            <person name="Tolentino E."/>
            <person name="Westbrock-Wadman S."/>
            <person name="Yuan Y."/>
            <person name="Brody L.L."/>
            <person name="Coulter S.N."/>
            <person name="Folger K.R."/>
            <person name="Kas A."/>
            <person name="Larbig K."/>
            <person name="Lim R.M."/>
            <person name="Smith K.A."/>
            <person name="Spencer D.H."/>
            <person name="Wong G.K.-S."/>
            <person name="Wu Z."/>
            <person name="Paulsen I.T."/>
            <person name="Reizer J."/>
            <person name="Saier M.H. Jr."/>
            <person name="Hancock R.E.W."/>
            <person name="Lory S."/>
            <person name="Olson M.V."/>
        </authorList>
    </citation>
    <scope>NUCLEOTIDE SEQUENCE [LARGE SCALE GENOMIC DNA]</scope>
    <source>
        <strain>ATCC 15692 / DSM 22644 / CIP 104116 / JCM 14847 / LMG 12228 / 1C / PRS 101 / PAO1</strain>
    </source>
</reference>
<reference key="4">
    <citation type="submission" date="2000-04" db="UniProtKB">
        <authorList>
            <person name="Lahnstein J."/>
        </authorList>
    </citation>
    <scope>PROTEIN SEQUENCE OF 212-226</scope>
</reference>
<gene>
    <name type="primary">prpL</name>
    <name type="ordered locus">PA4175</name>
</gene>
<protein>
    <recommendedName>
        <fullName>Lysyl endopeptidase</fullName>
        <ecNumber>3.4.21.50</ecNumber>
    </recommendedName>
    <alternativeName>
        <fullName>Protease IV</fullName>
    </alternativeName>
    <alternativeName>
        <fullName>PvdS-regulated endoprotease</fullName>
    </alternativeName>
</protein>